<evidence type="ECO:0000250" key="1">
    <source>
        <dbReference type="UniProtKB" id="P31328"/>
    </source>
</evidence>
<evidence type="ECO:0000269" key="2">
    <source>
    </source>
</evidence>
<evidence type="ECO:0000269" key="3">
    <source ref="2"/>
</evidence>
<evidence type="ECO:0000303" key="4">
    <source>
    </source>
</evidence>
<evidence type="ECO:0000303" key="5">
    <source ref="2"/>
</evidence>
<evidence type="ECO:0000305" key="6"/>
<name>TX26A_PHONI</name>
<proteinExistence type="evidence at protein level"/>
<dbReference type="GO" id="GO:0005576">
    <property type="term" value="C:extracellular region"/>
    <property type="evidence" value="ECO:0007669"/>
    <property type="project" value="UniProtKB-SubCell"/>
</dbReference>
<dbReference type="GO" id="GO:0005246">
    <property type="term" value="F:calcium channel regulator activity"/>
    <property type="evidence" value="ECO:0007669"/>
    <property type="project" value="UniProtKB-KW"/>
</dbReference>
<dbReference type="GO" id="GO:0008200">
    <property type="term" value="F:ion channel inhibitor activity"/>
    <property type="evidence" value="ECO:0007669"/>
    <property type="project" value="InterPro"/>
</dbReference>
<dbReference type="GO" id="GO:0090729">
    <property type="term" value="F:toxin activity"/>
    <property type="evidence" value="ECO:0007669"/>
    <property type="project" value="UniProtKB-KW"/>
</dbReference>
<dbReference type="InterPro" id="IPR011696">
    <property type="entry name" value="Huwentoxin-1"/>
</dbReference>
<dbReference type="Pfam" id="PF07740">
    <property type="entry name" value="Toxin_12"/>
    <property type="match status" value="1"/>
</dbReference>
<comment type="function">
    <text evidence="3">Neurotoxin. Causes spastic paralysis and death in mice. Moderate inhibitor of L-type calcium channels (Cav1/CACNA1).</text>
</comment>
<comment type="subcellular location">
    <subcellularLocation>
        <location evidence="2 3">Secreted</location>
    </subcellularLocation>
</comment>
<comment type="tissue specificity">
    <text evidence="2 3">Expressed by the venom gland.</text>
</comment>
<comment type="domain">
    <text evidence="1">The presence of a 'disulfide through disulfide knot' structurally defines this protein as a knottin.</text>
</comment>
<comment type="mass spectrometry"/>
<comment type="mass spectrometry"/>
<comment type="similarity">
    <text evidence="6">Belongs to the neurotoxin 10 (Hwtx-1) family. 53 (PNTx27C4) subfamily.</text>
</comment>
<protein>
    <recommendedName>
        <fullName evidence="4 5">Neurotoxin PRTx26An0C3</fullName>
    </recommendedName>
</protein>
<reference key="1">
    <citation type="journal article" date="2006" name="Comp. Biochem. Physiol.">
        <title>Comparison of the partial proteomes of the venoms of Brazilian spiders of the genus Phoneutria.</title>
        <authorList>
            <person name="Richardson M."/>
            <person name="Pimenta A.M."/>
            <person name="Bemquerer M.P."/>
            <person name="Santoro M.M."/>
            <person name="Beirao P.S."/>
            <person name="Lima M.E."/>
            <person name="Figueiredo S.G."/>
            <person name="Bloch C. Jr."/>
            <person name="Vasconcelos E.A."/>
            <person name="Campos F.A."/>
            <person name="Gomes P.C."/>
            <person name="Cordeiro M.N."/>
        </authorList>
    </citation>
    <scope>PROTEIN SEQUENCE</scope>
    <scope>SUBCELLULAR LOCATION</scope>
    <scope>TISSUE SPECIFICITY</scope>
    <scope>MASS SPECTROMETRY</scope>
    <source>
        <tissue>Venom</tissue>
    </source>
</reference>
<reference key="2">
    <citation type="journal article" date="2008" name="Protein Pept. Lett.">
        <title>A new family of small (4kDa) neurotoxins from the venoms of spiders of the genus Poneutria.</title>
        <authorList>
            <person name="Lucio A.D."/>
            <person name="Champos F.V."/>
            <person name="Richardson M."/>
            <person name="Cordeiro M.N."/>
            <person name="Mazzoni M.S.C."/>
            <person name="de Lima M.E."/>
            <person name="Pimenta A.M.C."/>
            <person name="Bemquerer M.P."/>
            <person name="Figueiredo S.G."/>
            <person name="Gomes P.C."/>
            <person name="Beirao P.S.L."/>
        </authorList>
    </citation>
    <scope>PROTEIN SEQUENCE</scope>
    <scope>FUNCTION</scope>
    <scope>SUBCELLULAR LOCATION</scope>
    <scope>TISSUE SPECIFICITY</scope>
    <scope>MASS SPECTROMETRY</scope>
    <source>
        <tissue>Venom</tissue>
    </source>
</reference>
<accession>P86418</accession>
<organism>
    <name type="scientific">Phoneutria nigriventer</name>
    <name type="common">Brazilian armed spider</name>
    <name type="synonym">Ctenus nigriventer</name>
    <dbReference type="NCBI Taxonomy" id="6918"/>
    <lineage>
        <taxon>Eukaryota</taxon>
        <taxon>Metazoa</taxon>
        <taxon>Ecdysozoa</taxon>
        <taxon>Arthropoda</taxon>
        <taxon>Chelicerata</taxon>
        <taxon>Arachnida</taxon>
        <taxon>Araneae</taxon>
        <taxon>Araneomorphae</taxon>
        <taxon>Entelegynae</taxon>
        <taxon>Lycosoidea</taxon>
        <taxon>Ctenidae</taxon>
        <taxon>Phoneutria</taxon>
    </lineage>
</organism>
<feature type="peptide" id="PRO_0000390933" description="Neurotoxin PRTx26An0C3" evidence="2 3">
    <location>
        <begin position="1"/>
        <end position="36"/>
    </location>
</feature>
<feature type="disulfide bond" evidence="1">
    <location>
        <begin position="3"/>
        <end position="17"/>
    </location>
</feature>
<feature type="disulfide bond" evidence="1">
    <location>
        <begin position="10"/>
        <end position="22"/>
    </location>
</feature>
<feature type="disulfide bond" evidence="1">
    <location>
        <begin position="16"/>
        <end position="34"/>
    </location>
</feature>
<sequence>IACAPRFSICNSDKECCKGLRCQSRIANMWPTFCLV</sequence>
<keyword id="KW-0108">Calcium channel impairing toxin</keyword>
<keyword id="KW-0903">Direct protein sequencing</keyword>
<keyword id="KW-1015">Disulfide bond</keyword>
<keyword id="KW-0872">Ion channel impairing toxin</keyword>
<keyword id="KW-0960">Knottin</keyword>
<keyword id="KW-0528">Neurotoxin</keyword>
<keyword id="KW-0964">Secreted</keyword>
<keyword id="KW-0800">Toxin</keyword>
<keyword id="KW-1218">Voltage-gated calcium channel impairing toxin</keyword>